<dbReference type="EMBL" id="CP000263">
    <property type="protein sequence ID" value="ABJ90795.1"/>
    <property type="molecule type" value="Genomic_DNA"/>
</dbReference>
<dbReference type="RefSeq" id="WP_011672714.1">
    <property type="nucleotide sequence ID" value="NC_008513.1"/>
</dbReference>
<dbReference type="SMR" id="Q057A4"/>
<dbReference type="STRING" id="372461.BCc_341"/>
<dbReference type="KEGG" id="bcc:BCc_341"/>
<dbReference type="eggNOG" id="COG0087">
    <property type="taxonomic scope" value="Bacteria"/>
</dbReference>
<dbReference type="HOGENOM" id="CLU_044142_4_1_6"/>
<dbReference type="OrthoDB" id="9806135at2"/>
<dbReference type="Proteomes" id="UP000000669">
    <property type="component" value="Chromosome"/>
</dbReference>
<dbReference type="GO" id="GO:0022625">
    <property type="term" value="C:cytosolic large ribosomal subunit"/>
    <property type="evidence" value="ECO:0007669"/>
    <property type="project" value="TreeGrafter"/>
</dbReference>
<dbReference type="GO" id="GO:0019843">
    <property type="term" value="F:rRNA binding"/>
    <property type="evidence" value="ECO:0007669"/>
    <property type="project" value="UniProtKB-UniRule"/>
</dbReference>
<dbReference type="GO" id="GO:0003735">
    <property type="term" value="F:structural constituent of ribosome"/>
    <property type="evidence" value="ECO:0007669"/>
    <property type="project" value="InterPro"/>
</dbReference>
<dbReference type="GO" id="GO:0006412">
    <property type="term" value="P:translation"/>
    <property type="evidence" value="ECO:0007669"/>
    <property type="project" value="UniProtKB-UniRule"/>
</dbReference>
<dbReference type="FunFam" id="2.40.30.10:FF:000004">
    <property type="entry name" value="50S ribosomal protein L3"/>
    <property type="match status" value="1"/>
</dbReference>
<dbReference type="FunFam" id="3.30.160.810:FF:000001">
    <property type="entry name" value="50S ribosomal protein L3"/>
    <property type="match status" value="1"/>
</dbReference>
<dbReference type="Gene3D" id="3.30.160.810">
    <property type="match status" value="1"/>
</dbReference>
<dbReference type="Gene3D" id="2.40.30.10">
    <property type="entry name" value="Translation factors"/>
    <property type="match status" value="1"/>
</dbReference>
<dbReference type="HAMAP" id="MF_01325_B">
    <property type="entry name" value="Ribosomal_uL3_B"/>
    <property type="match status" value="1"/>
</dbReference>
<dbReference type="InterPro" id="IPR000597">
    <property type="entry name" value="Ribosomal_uL3"/>
</dbReference>
<dbReference type="InterPro" id="IPR019927">
    <property type="entry name" value="Ribosomal_uL3_bac/org-type"/>
</dbReference>
<dbReference type="InterPro" id="IPR019926">
    <property type="entry name" value="Ribosomal_uL3_CS"/>
</dbReference>
<dbReference type="InterPro" id="IPR009000">
    <property type="entry name" value="Transl_B-barrel_sf"/>
</dbReference>
<dbReference type="NCBIfam" id="TIGR03625">
    <property type="entry name" value="L3_bact"/>
    <property type="match status" value="1"/>
</dbReference>
<dbReference type="PANTHER" id="PTHR11229">
    <property type="entry name" value="50S RIBOSOMAL PROTEIN L3"/>
    <property type="match status" value="1"/>
</dbReference>
<dbReference type="PANTHER" id="PTHR11229:SF16">
    <property type="entry name" value="LARGE RIBOSOMAL SUBUNIT PROTEIN UL3C"/>
    <property type="match status" value="1"/>
</dbReference>
<dbReference type="Pfam" id="PF00297">
    <property type="entry name" value="Ribosomal_L3"/>
    <property type="match status" value="1"/>
</dbReference>
<dbReference type="SUPFAM" id="SSF50447">
    <property type="entry name" value="Translation proteins"/>
    <property type="match status" value="1"/>
</dbReference>
<dbReference type="PROSITE" id="PS00474">
    <property type="entry name" value="RIBOSOMAL_L3"/>
    <property type="match status" value="1"/>
</dbReference>
<proteinExistence type="inferred from homology"/>
<sequence>MIGLVGKKLGMTRIFFEEYTSIPVTAIEILDNIVVQVKTIENDNYESIQLTTGFKKEKKVLKSEYGHFLKFNVSVGRGLWEFKCKNSSNYSSGQKITINFFKNIKKLDITGISKGKGFAGTVKRWNFRMQDATHGNSLSHRVPGSIGQNQTPGHVFKGKKMSGHLGDQRTTIQNLKIVKIDDINKIILIKGSIPGSIGSDILLKPSIK</sequence>
<comment type="function">
    <text evidence="1">One of the primary rRNA binding proteins, it binds directly near the 3'-end of the 23S rRNA, where it nucleates assembly of the 50S subunit.</text>
</comment>
<comment type="subunit">
    <text evidence="1">Part of the 50S ribosomal subunit. Forms a cluster with proteins L14 and L19.</text>
</comment>
<comment type="PTM">
    <text evidence="1">Methylated by PrmB.</text>
</comment>
<comment type="similarity">
    <text evidence="1">Belongs to the universal ribosomal protein uL3 family.</text>
</comment>
<evidence type="ECO:0000255" key="1">
    <source>
        <dbReference type="HAMAP-Rule" id="MF_01325"/>
    </source>
</evidence>
<evidence type="ECO:0000305" key="2"/>
<organism>
    <name type="scientific">Buchnera aphidicola subsp. Cinara cedri (strain Cc)</name>
    <dbReference type="NCBI Taxonomy" id="372461"/>
    <lineage>
        <taxon>Bacteria</taxon>
        <taxon>Pseudomonadati</taxon>
        <taxon>Pseudomonadota</taxon>
        <taxon>Gammaproteobacteria</taxon>
        <taxon>Enterobacterales</taxon>
        <taxon>Erwiniaceae</taxon>
        <taxon>Buchnera</taxon>
    </lineage>
</organism>
<accession>Q057A4</accession>
<name>RL3_BUCCC</name>
<reference key="1">
    <citation type="journal article" date="2006" name="Science">
        <title>A small microbial genome: the end of a long symbiotic relationship?</title>
        <authorList>
            <person name="Perez-Brocal V."/>
            <person name="Gil R."/>
            <person name="Ramos S."/>
            <person name="Lamelas A."/>
            <person name="Postigo M."/>
            <person name="Michelena J.M."/>
            <person name="Silva F.J."/>
            <person name="Moya A."/>
            <person name="Latorre A."/>
        </authorList>
    </citation>
    <scope>NUCLEOTIDE SEQUENCE [LARGE SCALE GENOMIC DNA]</scope>
    <source>
        <strain>Cc</strain>
    </source>
</reference>
<keyword id="KW-0488">Methylation</keyword>
<keyword id="KW-1185">Reference proteome</keyword>
<keyword id="KW-0687">Ribonucleoprotein</keyword>
<keyword id="KW-0689">Ribosomal protein</keyword>
<keyword id="KW-0694">RNA-binding</keyword>
<keyword id="KW-0699">rRNA-binding</keyword>
<gene>
    <name evidence="1" type="primary">rplC</name>
    <name type="ordered locus">BCc_341</name>
</gene>
<protein>
    <recommendedName>
        <fullName evidence="1">Large ribosomal subunit protein uL3</fullName>
    </recommendedName>
    <alternativeName>
        <fullName evidence="2">50S ribosomal protein L3</fullName>
    </alternativeName>
</protein>
<feature type="chain" id="PRO_1000052018" description="Large ribosomal subunit protein uL3">
    <location>
        <begin position="1"/>
        <end position="208"/>
    </location>
</feature>
<feature type="modified residue" description="N5-methylglutamine" evidence="1">
    <location>
        <position position="150"/>
    </location>
</feature>